<evidence type="ECO:0000250" key="1">
    <source>
        <dbReference type="UniProtKB" id="O14773"/>
    </source>
</evidence>
<evidence type="ECO:0000250" key="2">
    <source>
        <dbReference type="UniProtKB" id="Q9EQV6"/>
    </source>
</evidence>
<evidence type="ECO:0000255" key="3"/>
<evidence type="ECO:0000305" key="4"/>
<keyword id="KW-0068">Autocatalytic cleavage</keyword>
<keyword id="KW-0106">Calcium</keyword>
<keyword id="KW-1015">Disulfide bond</keyword>
<keyword id="KW-0325">Glycoprotein</keyword>
<keyword id="KW-0378">Hydrolase</keyword>
<keyword id="KW-0458">Lysosome</keyword>
<keyword id="KW-0479">Metal-binding</keyword>
<keyword id="KW-0645">Protease</keyword>
<keyword id="KW-1185">Reference proteome</keyword>
<keyword id="KW-0720">Serine protease</keyword>
<keyword id="KW-0732">Signal</keyword>
<keyword id="KW-0865">Zymogen</keyword>
<feature type="signal peptide" evidence="1">
    <location>
        <begin position="1"/>
        <end position="19"/>
    </location>
</feature>
<feature type="propeptide" id="PRO_0000027376" description="Removed in mature form" evidence="1">
    <location>
        <begin position="20"/>
        <end position="195"/>
    </location>
</feature>
<feature type="chain" id="PRO_0000027377" description="Tripeptidyl-peptidase 1">
    <location>
        <begin position="196"/>
        <end position="563"/>
    </location>
</feature>
<feature type="domain" description="Peptidase S53">
    <location>
        <begin position="199"/>
        <end position="563"/>
    </location>
</feature>
<feature type="active site" description="Charge relay system" evidence="1">
    <location>
        <position position="272"/>
    </location>
</feature>
<feature type="active site" description="Charge relay system" evidence="1">
    <location>
        <position position="276"/>
    </location>
</feature>
<feature type="active site" description="Charge relay system" evidence="1">
    <location>
        <position position="475"/>
    </location>
</feature>
<feature type="binding site" evidence="1">
    <location>
        <position position="517"/>
    </location>
    <ligand>
        <name>Ca(2+)</name>
        <dbReference type="ChEBI" id="CHEBI:29108"/>
    </ligand>
</feature>
<feature type="binding site" evidence="1">
    <location>
        <position position="518"/>
    </location>
    <ligand>
        <name>Ca(2+)</name>
        <dbReference type="ChEBI" id="CHEBI:29108"/>
    </ligand>
</feature>
<feature type="binding site" evidence="1">
    <location>
        <position position="539"/>
    </location>
    <ligand>
        <name>Ca(2+)</name>
        <dbReference type="ChEBI" id="CHEBI:29108"/>
    </ligand>
</feature>
<feature type="binding site" evidence="1">
    <location>
        <position position="541"/>
    </location>
    <ligand>
        <name>Ca(2+)</name>
        <dbReference type="ChEBI" id="CHEBI:29108"/>
    </ligand>
</feature>
<feature type="binding site" evidence="1">
    <location>
        <position position="543"/>
    </location>
    <ligand>
        <name>Ca(2+)</name>
        <dbReference type="ChEBI" id="CHEBI:29108"/>
    </ligand>
</feature>
<feature type="glycosylation site" description="N-linked (GlcNAc...) asparagine" evidence="3">
    <location>
        <position position="210"/>
    </location>
</feature>
<feature type="glycosylation site" description="N-linked (GlcNAc...) asparagine" evidence="3">
    <location>
        <position position="222"/>
    </location>
</feature>
<feature type="glycosylation site" description="N-linked (GlcNAc...) asparagine" evidence="3">
    <location>
        <position position="286"/>
    </location>
</feature>
<feature type="glycosylation site" description="N-linked (GlcNAc...) asparagine" evidence="3">
    <location>
        <position position="313"/>
    </location>
</feature>
<feature type="glycosylation site" description="N-linked (GlcNAc...) asparagine" evidence="3">
    <location>
        <position position="443"/>
    </location>
</feature>
<feature type="disulfide bond" evidence="1">
    <location>
        <begin position="111"/>
        <end position="122"/>
    </location>
</feature>
<feature type="disulfide bond" evidence="1">
    <location>
        <begin position="365"/>
        <end position="526"/>
    </location>
</feature>
<feature type="disulfide bond" evidence="1">
    <location>
        <begin position="522"/>
        <end position="537"/>
    </location>
</feature>
<feature type="sequence conflict" description="In Ref. 1; BAC20587." evidence="4" ref="1">
    <original>A</original>
    <variation>V</variation>
    <location>
        <position position="425"/>
    </location>
</feature>
<feature type="sequence conflict" description="In Ref. 1; BAC20587." evidence="4" ref="1">
    <original>S</original>
    <variation>N</variation>
    <location>
        <position position="463"/>
    </location>
</feature>
<dbReference type="EC" id="3.4.14.9"/>
<dbReference type="EMBL" id="AB083308">
    <property type="protein sequence ID" value="BAC20587.1"/>
    <property type="molecule type" value="mRNA"/>
</dbReference>
<dbReference type="EMBL" id="AB125156">
    <property type="protein sequence ID" value="BAD51944.1"/>
    <property type="status" value="ALT_INIT"/>
    <property type="molecule type" value="mRNA"/>
</dbReference>
<dbReference type="SMR" id="Q60HH1"/>
<dbReference type="STRING" id="9541.ENSMFAP00000020985"/>
<dbReference type="MEROPS" id="S53.003"/>
<dbReference type="GlyCosmos" id="Q60HH1">
    <property type="glycosylation" value="5 sites, No reported glycans"/>
</dbReference>
<dbReference type="VEuPathDB" id="HostDB:ENSMFAG00000033375"/>
<dbReference type="eggNOG" id="ENOG502QR6D">
    <property type="taxonomic scope" value="Eukaryota"/>
</dbReference>
<dbReference type="OMA" id="YARSVCN"/>
<dbReference type="Proteomes" id="UP000233100">
    <property type="component" value="Chromosome 14"/>
</dbReference>
<dbReference type="GO" id="GO:0005794">
    <property type="term" value="C:Golgi apparatus"/>
    <property type="evidence" value="ECO:0000250"/>
    <property type="project" value="UniProtKB"/>
</dbReference>
<dbReference type="GO" id="GO:0005764">
    <property type="term" value="C:lysosome"/>
    <property type="evidence" value="ECO:0000250"/>
    <property type="project" value="UniProtKB"/>
</dbReference>
<dbReference type="GO" id="GO:0042470">
    <property type="term" value="C:melanosome"/>
    <property type="evidence" value="ECO:0007669"/>
    <property type="project" value="UniProtKB-SubCell"/>
</dbReference>
<dbReference type="GO" id="GO:0045121">
    <property type="term" value="C:membrane raft"/>
    <property type="evidence" value="ECO:0000250"/>
    <property type="project" value="UniProtKB"/>
</dbReference>
<dbReference type="GO" id="GO:0055037">
    <property type="term" value="C:recycling endosome"/>
    <property type="evidence" value="ECO:0000250"/>
    <property type="project" value="UniProtKB"/>
</dbReference>
<dbReference type="GO" id="GO:0004175">
    <property type="term" value="F:endopeptidase activity"/>
    <property type="evidence" value="ECO:0000250"/>
    <property type="project" value="UniProtKB"/>
</dbReference>
<dbReference type="GO" id="GO:0035727">
    <property type="term" value="F:lysophosphatidic acid binding"/>
    <property type="evidence" value="ECO:0000250"/>
    <property type="project" value="UniProtKB"/>
</dbReference>
<dbReference type="GO" id="GO:0046872">
    <property type="term" value="F:metal ion binding"/>
    <property type="evidence" value="ECO:0007669"/>
    <property type="project" value="UniProtKB-KW"/>
</dbReference>
<dbReference type="GO" id="GO:0008233">
    <property type="term" value="F:peptidase activity"/>
    <property type="evidence" value="ECO:0000250"/>
    <property type="project" value="UniProtKB"/>
</dbReference>
<dbReference type="GO" id="GO:0004252">
    <property type="term" value="F:serine-type endopeptidase activity"/>
    <property type="evidence" value="ECO:0007669"/>
    <property type="project" value="InterPro"/>
</dbReference>
<dbReference type="GO" id="GO:0008236">
    <property type="term" value="F:serine-type peptidase activity"/>
    <property type="evidence" value="ECO:0000250"/>
    <property type="project" value="UniProtKB"/>
</dbReference>
<dbReference type="GO" id="GO:0120146">
    <property type="term" value="F:sulfatide binding"/>
    <property type="evidence" value="ECO:0000250"/>
    <property type="project" value="UniProtKB"/>
</dbReference>
<dbReference type="GO" id="GO:0008240">
    <property type="term" value="F:tripeptidyl-peptidase activity"/>
    <property type="evidence" value="ECO:0000250"/>
    <property type="project" value="UniProtKB"/>
</dbReference>
<dbReference type="GO" id="GO:0045453">
    <property type="term" value="P:bone resorption"/>
    <property type="evidence" value="ECO:0000250"/>
    <property type="project" value="UniProtKB"/>
</dbReference>
<dbReference type="GO" id="GO:0007417">
    <property type="term" value="P:central nervous system development"/>
    <property type="evidence" value="ECO:0007669"/>
    <property type="project" value="TreeGrafter"/>
</dbReference>
<dbReference type="GO" id="GO:0007399">
    <property type="term" value="P:nervous system development"/>
    <property type="evidence" value="ECO:0000250"/>
    <property type="project" value="UniProtKB"/>
</dbReference>
<dbReference type="GO" id="GO:0043171">
    <property type="term" value="P:peptide catabolic process"/>
    <property type="evidence" value="ECO:0000250"/>
    <property type="project" value="UniProtKB"/>
</dbReference>
<dbReference type="GO" id="GO:0006508">
    <property type="term" value="P:proteolysis"/>
    <property type="evidence" value="ECO:0000250"/>
    <property type="project" value="UniProtKB"/>
</dbReference>
<dbReference type="CDD" id="cd04056">
    <property type="entry name" value="Peptidases_S53"/>
    <property type="match status" value="1"/>
</dbReference>
<dbReference type="CDD" id="cd11377">
    <property type="entry name" value="Pro-peptidase_S53"/>
    <property type="match status" value="1"/>
</dbReference>
<dbReference type="FunFam" id="3.40.50.200:FF:000012">
    <property type="entry name" value="Tripeptidyl-peptidase 1 preproprotein"/>
    <property type="match status" value="1"/>
</dbReference>
<dbReference type="Gene3D" id="3.40.50.200">
    <property type="entry name" value="Peptidase S8/S53 domain"/>
    <property type="match status" value="1"/>
</dbReference>
<dbReference type="InterPro" id="IPR000209">
    <property type="entry name" value="Peptidase_S8/S53_dom"/>
</dbReference>
<dbReference type="InterPro" id="IPR036852">
    <property type="entry name" value="Peptidase_S8/S53_dom_sf"/>
</dbReference>
<dbReference type="InterPro" id="IPR015366">
    <property type="entry name" value="S53_propep"/>
</dbReference>
<dbReference type="InterPro" id="IPR030400">
    <property type="entry name" value="Sedolisin_dom"/>
</dbReference>
<dbReference type="InterPro" id="IPR050819">
    <property type="entry name" value="Tripeptidyl-peptidase_I"/>
</dbReference>
<dbReference type="PANTHER" id="PTHR14218">
    <property type="entry name" value="PROTEASE S8 TRIPEPTIDYL PEPTIDASE I CLN2"/>
    <property type="match status" value="1"/>
</dbReference>
<dbReference type="PANTHER" id="PTHR14218:SF15">
    <property type="entry name" value="TRIPEPTIDYL-PEPTIDASE 1"/>
    <property type="match status" value="1"/>
</dbReference>
<dbReference type="Pfam" id="PF00082">
    <property type="entry name" value="Peptidase_S8"/>
    <property type="match status" value="1"/>
</dbReference>
<dbReference type="Pfam" id="PF09286">
    <property type="entry name" value="Pro-kuma_activ"/>
    <property type="match status" value="1"/>
</dbReference>
<dbReference type="SMART" id="SM00944">
    <property type="entry name" value="Pro-kuma_activ"/>
    <property type="match status" value="1"/>
</dbReference>
<dbReference type="SUPFAM" id="SSF54897">
    <property type="entry name" value="Protease propeptides/inhibitors"/>
    <property type="match status" value="1"/>
</dbReference>
<dbReference type="SUPFAM" id="SSF52743">
    <property type="entry name" value="Subtilisin-like"/>
    <property type="match status" value="1"/>
</dbReference>
<dbReference type="PROSITE" id="PS51695">
    <property type="entry name" value="SEDOLISIN"/>
    <property type="match status" value="1"/>
</dbReference>
<reference key="1">
    <citation type="submission" date="2003-10" db="EMBL/GenBank/DDBJ databases">
        <title>Isolation and characterization of cDNA for macaque neurological disease genes.</title>
        <authorList>
            <person name="Kusuda J."/>
            <person name="Osada N."/>
            <person name="Tanuma R."/>
            <person name="Hirata M."/>
            <person name="Sugano S."/>
            <person name="Hashimoto K."/>
        </authorList>
    </citation>
    <scope>NUCLEOTIDE SEQUENCE [LARGE SCALE MRNA]</scope>
    <source>
        <tissue>Brain cortex</tissue>
        <tissue>Temporal cortex</tissue>
    </source>
</reference>
<accession>Q60HH1</accession>
<accession>Q8HXY1</accession>
<organism>
    <name type="scientific">Macaca fascicularis</name>
    <name type="common">Crab-eating macaque</name>
    <name type="synonym">Cynomolgus monkey</name>
    <dbReference type="NCBI Taxonomy" id="9541"/>
    <lineage>
        <taxon>Eukaryota</taxon>
        <taxon>Metazoa</taxon>
        <taxon>Chordata</taxon>
        <taxon>Craniata</taxon>
        <taxon>Vertebrata</taxon>
        <taxon>Euteleostomi</taxon>
        <taxon>Mammalia</taxon>
        <taxon>Eutheria</taxon>
        <taxon>Euarchontoglires</taxon>
        <taxon>Primates</taxon>
        <taxon>Haplorrhini</taxon>
        <taxon>Catarrhini</taxon>
        <taxon>Cercopithecidae</taxon>
        <taxon>Cercopithecinae</taxon>
        <taxon>Macaca</taxon>
    </lineage>
</organism>
<gene>
    <name type="primary">TPP1</name>
    <name type="synonym">CLN2</name>
    <name type="ORF">QccE-12010</name>
    <name type="ORF">QtrA-16970</name>
</gene>
<proteinExistence type="evidence at transcript level"/>
<sequence>MGLQACLLGLFALILSGKCSYSPEPDQRRTLPPGWVSLGRADPEEELSLTFALRQQNLERLSELVQAVSDPNSPQYGKYLTLENVADLVRPSPLTLHMVQKWLLAAGAQKCHSVITQDFLTCWLSIRQAELLLPGAEFHHYVGGPTETHVVRSPRPYQLPQALAPHVDFVGGLHRFPPTSSLRQRPEPQVTGTVGLHLGVTPSVIRKRYNLTSQDVGSGTSNNSQACAQFLEQYFHDSDLAQFMRLFGGNFAHQASVTRVVGQQGRGRAGIEASLDVQYLMSAGANISTWVYSSPGRHEGQEPFLQWLMLLSNESALPHVHTVSYGDEEDSLSSAYIQRVNTELMKAAARGLTLLFASGDSGAGCWSVSGRHQFRPTFPASSPYVTTVGGTSFQEPFLITNEIVDYISGGGFSNVFPRPSYQEEAVAKFLSSSPHLPPSGYFNASGRAYPDVAALSDGYWVVSNRVPIPWVSGTSASTPVFGGLLSLINEHRILSGRPPLGFLNPRLYQQHGAGLFDVTHGCHASCLDEEVEGQGFCSGPGWDPVTGWGTPNFPALLKTLLNP</sequence>
<protein>
    <recommendedName>
        <fullName>Tripeptidyl-peptidase 1</fullName>
        <shortName>TPP-1</shortName>
        <ecNumber>3.4.14.9</ecNumber>
    </recommendedName>
    <alternativeName>
        <fullName>Tripeptidyl aminopeptidase</fullName>
    </alternativeName>
    <alternativeName>
        <fullName>Tripeptidyl-peptidase I</fullName>
        <shortName>TPP-I</shortName>
    </alternativeName>
</protein>
<comment type="function">
    <text evidence="2">Lysosomal serine protease with tripeptidyl-peptidase I activity. May act as a non-specific lysosomal peptidase which generates tripeptides from the breakdown products produced by lysosomal proteinases. Requires substrates with an unsubstituted N-terminus (By similarity).</text>
</comment>
<comment type="catalytic activity">
    <reaction>
        <text>Release of an N-terminal tripeptide from a polypeptide, but also has endopeptidase activity.</text>
        <dbReference type="EC" id="3.4.14.9"/>
    </reaction>
</comment>
<comment type="cofactor">
    <cofactor evidence="1">
        <name>Ca(2+)</name>
        <dbReference type="ChEBI" id="CHEBI:29108"/>
    </cofactor>
    <text evidence="1">Binds 1 Ca(2+) ion per subunit.</text>
</comment>
<comment type="subunit">
    <text evidence="1">Monomer. Interacts with CLN5. Interacts with CLN3 (By similarity).</text>
</comment>
<comment type="subcellular location">
    <subcellularLocation>
        <location evidence="1">Lysosome</location>
    </subcellularLocation>
    <subcellularLocation>
        <location evidence="1">Melanosome</location>
    </subcellularLocation>
</comment>
<comment type="PTM">
    <text evidence="1">Activated by autocatalytic proteolytical processing upon acidification. N-glycosylation is required for processing and activity (By similarity).</text>
</comment>
<comment type="sequence caution" evidence="4">
    <conflict type="erroneous initiation">
        <sequence resource="EMBL-CDS" id="BAD51944"/>
    </conflict>
</comment>
<name>TPP1_MACFA</name>